<evidence type="ECO:0000250" key="1"/>
<evidence type="ECO:0000256" key="2">
    <source>
        <dbReference type="SAM" id="MobiDB-lite"/>
    </source>
</evidence>
<evidence type="ECO:0000305" key="3"/>
<comment type="function">
    <text evidence="1">Plays an important role in bacterial chemotaxis signal transduction pathway by accelerating the dephosphorylation of phosphorylated CheY (CheY-P).</text>
</comment>
<comment type="subunit">
    <text evidence="1">Homodimer.</text>
</comment>
<comment type="subcellular location">
    <subcellularLocation>
        <location evidence="1">Cytoplasm</location>
    </subcellularLocation>
</comment>
<comment type="similarity">
    <text evidence="3">Belongs to the CheZ family.</text>
</comment>
<comment type="sequence caution" evidence="3">
    <conflict type="erroneous initiation">
        <sequence resource="EMBL-CDS" id="AAG04846"/>
    </conflict>
    <text>Truncated N-terminus.</text>
</comment>
<organism>
    <name type="scientific">Pseudomonas aeruginosa (strain ATCC 15692 / DSM 22644 / CIP 104116 / JCM 14847 / LMG 12228 / 1C / PRS 101 / PAO1)</name>
    <dbReference type="NCBI Taxonomy" id="208964"/>
    <lineage>
        <taxon>Bacteria</taxon>
        <taxon>Pseudomonadati</taxon>
        <taxon>Pseudomonadota</taxon>
        <taxon>Gammaproteobacteria</taxon>
        <taxon>Pseudomonadales</taxon>
        <taxon>Pseudomonadaceae</taxon>
        <taxon>Pseudomonas</taxon>
    </lineage>
</organism>
<sequence>MQLIQELSQARDRGLYQEVGKLTRELHNAIVDFQIDPHSPHAQEMSQIADATDRLSYVVEMTEKAANRTMDLVEQSAPLVNQLGDDSRELHQEWQRFMRREIDADGFRELAKRIEQFLVRSGENAGQLSSQLNDILLAQDYQDLTGQVIKRVTKLVTEVESNLVKLVWMAGQVDRYAGIEHDHVSMRHQAALERSAKGEGPQVAAEKREDVVSGQDDVDDLLSSLGF</sequence>
<gene>
    <name type="primary">cheZ</name>
    <name type="ordered locus">PA1457</name>
</gene>
<reference key="1">
    <citation type="journal article" date="1995" name="J. Bacteriol.">
        <title>Isolation and characterization of chemotaxis mutants and genes of Pseudomonas aeruginosa.</title>
        <authorList>
            <person name="Masduki A."/>
            <person name="Nakamura J."/>
            <person name="Ohga T."/>
            <person name="Umezaki R."/>
            <person name="Kato J."/>
            <person name="Ohtake H."/>
        </authorList>
    </citation>
    <scope>NUCLEOTIDE SEQUENCE [GENOMIC DNA]</scope>
    <source>
        <strain>ATCC 15692 / DSM 22644 / CIP 104116 / JCM 14847 / LMG 12228 / 1C / PRS 101 / PAO1</strain>
    </source>
</reference>
<reference key="2">
    <citation type="journal article" date="1999" name="Biosci. Biotechnol. Biochem.">
        <title>Cloning and characterization of chemotaxis genes in Pseudomonas aeruginosa.</title>
        <authorList>
            <person name="Kato J."/>
            <person name="Nakamura T."/>
            <person name="Kuroda A."/>
            <person name="Ohtake H."/>
        </authorList>
    </citation>
    <scope>NUCLEOTIDE SEQUENCE [GENOMIC DNA]</scope>
    <source>
        <strain>ATCC 15692 / DSM 22644 / CIP 104116 / JCM 14847 / LMG 12228 / 1C / PRS 101 / PAO1</strain>
    </source>
</reference>
<reference key="3">
    <citation type="journal article" date="2000" name="Nature">
        <title>Complete genome sequence of Pseudomonas aeruginosa PAO1, an opportunistic pathogen.</title>
        <authorList>
            <person name="Stover C.K."/>
            <person name="Pham X.-Q.T."/>
            <person name="Erwin A.L."/>
            <person name="Mizoguchi S.D."/>
            <person name="Warrener P."/>
            <person name="Hickey M.J."/>
            <person name="Brinkman F.S.L."/>
            <person name="Hufnagle W.O."/>
            <person name="Kowalik D.J."/>
            <person name="Lagrou M."/>
            <person name="Garber R.L."/>
            <person name="Goltry L."/>
            <person name="Tolentino E."/>
            <person name="Westbrock-Wadman S."/>
            <person name="Yuan Y."/>
            <person name="Brody L.L."/>
            <person name="Coulter S.N."/>
            <person name="Folger K.R."/>
            <person name="Kas A."/>
            <person name="Larbig K."/>
            <person name="Lim R.M."/>
            <person name="Smith K.A."/>
            <person name="Spencer D.H."/>
            <person name="Wong G.K.-S."/>
            <person name="Wu Z."/>
            <person name="Paulsen I.T."/>
            <person name="Reizer J."/>
            <person name="Saier M.H. Jr."/>
            <person name="Hancock R.E.W."/>
            <person name="Lory S."/>
            <person name="Olson M.V."/>
        </authorList>
    </citation>
    <scope>NUCLEOTIDE SEQUENCE [LARGE SCALE GENOMIC DNA]</scope>
    <source>
        <strain>ATCC 15692 / DSM 22644 / CIP 104116 / JCM 14847 / LMG 12228 / 1C / PRS 101 / PAO1</strain>
    </source>
</reference>
<keyword id="KW-0145">Chemotaxis</keyword>
<keyword id="KW-0963">Cytoplasm</keyword>
<keyword id="KW-0283">Flagellar rotation</keyword>
<keyword id="KW-0378">Hydrolase</keyword>
<keyword id="KW-0904">Protein phosphatase</keyword>
<keyword id="KW-1185">Reference proteome</keyword>
<name>CHEZ_PSEAE</name>
<proteinExistence type="inferred from homology"/>
<protein>
    <recommendedName>
        <fullName>Protein phosphatase CheZ</fullName>
        <ecNumber>3.1.3.-</ecNumber>
    </recommendedName>
    <alternativeName>
        <fullName>Chemotaxis protein CheZ</fullName>
    </alternativeName>
</protein>
<accession>Q51434</accession>
<feature type="chain" id="PRO_0000089642" description="Protein phosphatase CheZ">
    <location>
        <begin position="1"/>
        <end position="227"/>
    </location>
</feature>
<feature type="region of interest" description="Disordered" evidence="2">
    <location>
        <begin position="194"/>
        <end position="217"/>
    </location>
</feature>
<feature type="site" description="Enhances dephosphorylation of CheY-P" evidence="1">
    <location>
        <position position="147"/>
    </location>
</feature>
<feature type="sequence conflict" description="In Ref. 1; BAA07056 and 2; BAA33548." evidence="3" ref="1 2">
    <original>V</original>
    <variation>E</variation>
    <location>
        <position position="59"/>
    </location>
</feature>
<feature type="sequence conflict" description="In Ref. 1; BAA07056 and 2; BAA33548." evidence="3" ref="1 2">
    <original>S</original>
    <variation>T</variation>
    <location>
        <position position="121"/>
    </location>
</feature>
<feature type="sequence conflict" description="In Ref. 1; BAA07056 and 2; BAA33548." evidence="3" ref="1 2">
    <original>L</original>
    <variation>M</variation>
    <location>
        <position position="192"/>
    </location>
</feature>
<dbReference type="EC" id="3.1.3.-"/>
<dbReference type="EMBL" id="D37810">
    <property type="protein sequence ID" value="BAA07056.1"/>
    <property type="molecule type" value="Genomic_DNA"/>
</dbReference>
<dbReference type="EMBL" id="AB012767">
    <property type="protein sequence ID" value="BAA33548.1"/>
    <property type="molecule type" value="Genomic_DNA"/>
</dbReference>
<dbReference type="EMBL" id="AE004091">
    <property type="protein sequence ID" value="AAG04846.1"/>
    <property type="status" value="ALT_INIT"/>
    <property type="molecule type" value="Genomic_DNA"/>
</dbReference>
<dbReference type="PIR" id="E83463">
    <property type="entry name" value="E83463"/>
</dbReference>
<dbReference type="PIR" id="T46613">
    <property type="entry name" value="T46613"/>
</dbReference>
<dbReference type="RefSeq" id="NP_250148.1">
    <property type="nucleotide sequence ID" value="NC_002516.2"/>
</dbReference>
<dbReference type="SMR" id="Q51434"/>
<dbReference type="FunCoup" id="Q51434">
    <property type="interactions" value="72"/>
</dbReference>
<dbReference type="STRING" id="208964.PA1457"/>
<dbReference type="PaxDb" id="208964-PA1457"/>
<dbReference type="DNASU" id="880861"/>
<dbReference type="GeneID" id="880861"/>
<dbReference type="KEGG" id="pae:PA1457"/>
<dbReference type="PATRIC" id="fig|208964.12.peg.1508"/>
<dbReference type="PseudoCAP" id="PA1457"/>
<dbReference type="HOGENOM" id="CLU_080718_0_0_6"/>
<dbReference type="InParanoid" id="Q51434"/>
<dbReference type="OrthoDB" id="9773007at2"/>
<dbReference type="PhylomeDB" id="Q51434"/>
<dbReference type="Proteomes" id="UP000002438">
    <property type="component" value="Chromosome"/>
</dbReference>
<dbReference type="GO" id="GO:0009288">
    <property type="term" value="C:bacterial-type flagellum"/>
    <property type="evidence" value="ECO:0007669"/>
    <property type="project" value="InterPro"/>
</dbReference>
<dbReference type="GO" id="GO:0005737">
    <property type="term" value="C:cytoplasm"/>
    <property type="evidence" value="ECO:0007669"/>
    <property type="project" value="UniProtKB-SubCell"/>
</dbReference>
<dbReference type="GO" id="GO:0004721">
    <property type="term" value="F:phosphoprotein phosphatase activity"/>
    <property type="evidence" value="ECO:0007669"/>
    <property type="project" value="UniProtKB-KW"/>
</dbReference>
<dbReference type="GO" id="GO:0071978">
    <property type="term" value="P:bacterial-type flagellum-dependent swarming motility"/>
    <property type="evidence" value="ECO:0000315"/>
    <property type="project" value="PseudoCAP"/>
</dbReference>
<dbReference type="GO" id="GO:0006935">
    <property type="term" value="P:chemotaxis"/>
    <property type="evidence" value="ECO:0000315"/>
    <property type="project" value="PseudoCAP"/>
</dbReference>
<dbReference type="GO" id="GO:0050920">
    <property type="term" value="P:regulation of chemotaxis"/>
    <property type="evidence" value="ECO:0007669"/>
    <property type="project" value="InterPro"/>
</dbReference>
<dbReference type="Gene3D" id="1.10.287.500">
    <property type="entry name" value="Helix hairpin bin"/>
    <property type="match status" value="1"/>
</dbReference>
<dbReference type="InterPro" id="IPR007439">
    <property type="entry name" value="Chemotax_Pase_CheZ"/>
</dbReference>
<dbReference type="InterPro" id="IPR050992">
    <property type="entry name" value="CheZ_family_phosphatases"/>
</dbReference>
<dbReference type="PANTHER" id="PTHR43693">
    <property type="entry name" value="PROTEIN PHOSPHATASE CHEZ"/>
    <property type="match status" value="1"/>
</dbReference>
<dbReference type="PANTHER" id="PTHR43693:SF1">
    <property type="entry name" value="PROTEIN PHOSPHATASE CHEZ"/>
    <property type="match status" value="1"/>
</dbReference>
<dbReference type="Pfam" id="PF04344">
    <property type="entry name" value="CheZ"/>
    <property type="match status" value="1"/>
</dbReference>
<dbReference type="PIRSF" id="PIRSF002884">
    <property type="entry name" value="CheZ"/>
    <property type="match status" value="1"/>
</dbReference>
<dbReference type="SUPFAM" id="SSF75708">
    <property type="entry name" value="Chemotaxis phosphatase CheZ"/>
    <property type="match status" value="1"/>
</dbReference>